<proteinExistence type="evidence at protein level"/>
<comment type="function">
    <text evidence="1">Removes the formyl group from the N-terminal Met of newly synthesized proteins. Requires at least a dipeptide for an efficient rate of reaction. N-terminal L-methionine is a prerequisite for activity but the enzyme has broad specificity at other positions.</text>
</comment>
<comment type="catalytic activity">
    <reaction evidence="1">
        <text>N-terminal N-formyl-L-methionyl-[peptide] + H2O = N-terminal L-methionyl-[peptide] + formate</text>
        <dbReference type="Rhea" id="RHEA:24420"/>
        <dbReference type="Rhea" id="RHEA-COMP:10639"/>
        <dbReference type="Rhea" id="RHEA-COMP:10640"/>
        <dbReference type="ChEBI" id="CHEBI:15377"/>
        <dbReference type="ChEBI" id="CHEBI:15740"/>
        <dbReference type="ChEBI" id="CHEBI:49298"/>
        <dbReference type="ChEBI" id="CHEBI:64731"/>
        <dbReference type="EC" id="3.5.1.88"/>
    </reaction>
</comment>
<comment type="cofactor">
    <cofactor evidence="1">
        <name>Fe(2+)</name>
        <dbReference type="ChEBI" id="CHEBI:29033"/>
    </cofactor>
    <text evidence="1">Binds 1 Fe(2+) ion.</text>
</comment>
<comment type="similarity">
    <text evidence="1">Belongs to the polypeptide deformylase family.</text>
</comment>
<protein>
    <recommendedName>
        <fullName evidence="1">Peptide deformylase 1</fullName>
        <shortName evidence="1">PDF 1</shortName>
        <ecNumber evidence="1">3.5.1.88</ecNumber>
    </recommendedName>
    <alternativeName>
        <fullName evidence="1">Polypeptide deformylase 1</fullName>
    </alternativeName>
</protein>
<gene>
    <name evidence="1" type="primary">def1</name>
    <name type="ordered locus">VC_0046</name>
</gene>
<name>DEF1_VIBCH</name>
<accession>Q9KVU3</accession>
<evidence type="ECO:0000255" key="1">
    <source>
        <dbReference type="HAMAP-Rule" id="MF_00163"/>
    </source>
</evidence>
<evidence type="ECO:0007829" key="2">
    <source>
        <dbReference type="PDB" id="3FWX"/>
    </source>
</evidence>
<feature type="chain" id="PRO_0000082873" description="Peptide deformylase 1">
    <location>
        <begin position="1"/>
        <end position="169"/>
    </location>
</feature>
<feature type="active site" evidence="1">
    <location>
        <position position="134"/>
    </location>
</feature>
<feature type="binding site" evidence="1">
    <location>
        <position position="91"/>
    </location>
    <ligand>
        <name>Fe cation</name>
        <dbReference type="ChEBI" id="CHEBI:24875"/>
    </ligand>
</feature>
<feature type="binding site" evidence="1">
    <location>
        <position position="133"/>
    </location>
    <ligand>
        <name>Fe cation</name>
        <dbReference type="ChEBI" id="CHEBI:24875"/>
    </ligand>
</feature>
<feature type="binding site" evidence="1">
    <location>
        <position position="137"/>
    </location>
    <ligand>
        <name>Fe cation</name>
        <dbReference type="ChEBI" id="CHEBI:24875"/>
    </ligand>
</feature>
<feature type="helix" evidence="2">
    <location>
        <begin position="12"/>
        <end position="15"/>
    </location>
</feature>
<feature type="helix" evidence="2">
    <location>
        <begin position="26"/>
        <end position="41"/>
    </location>
</feature>
<feature type="strand" evidence="2">
    <location>
        <begin position="45"/>
        <end position="48"/>
    </location>
</feature>
<feature type="helix" evidence="2">
    <location>
        <begin position="49"/>
        <end position="52"/>
    </location>
</feature>
<feature type="strand" evidence="2">
    <location>
        <begin position="56"/>
        <end position="61"/>
    </location>
</feature>
<feature type="strand" evidence="2">
    <location>
        <begin position="71"/>
        <end position="83"/>
    </location>
</feature>
<feature type="strand" evidence="2">
    <location>
        <begin position="85"/>
        <end position="89"/>
    </location>
</feature>
<feature type="strand" evidence="2">
    <location>
        <begin position="99"/>
        <end position="103"/>
    </location>
</feature>
<feature type="strand" evidence="2">
    <location>
        <begin position="105"/>
        <end position="112"/>
    </location>
</feature>
<feature type="strand" evidence="2">
    <location>
        <begin position="118"/>
        <end position="123"/>
    </location>
</feature>
<feature type="helix" evidence="2">
    <location>
        <begin position="125"/>
        <end position="138"/>
    </location>
</feature>
<feature type="helix" evidence="2">
    <location>
        <begin position="143"/>
        <end position="146"/>
    </location>
</feature>
<feature type="helix" evidence="2">
    <location>
        <begin position="149"/>
        <end position="163"/>
    </location>
</feature>
<sequence length="169" mass="19147">MSVLQVLTFPDDRLRTVAKPVEQVTPEIQQIVDDMLETMYAEEGIGLAATQVDIHQRIVVIDISETRDQPMVLINPEIIEKRGEDGIEEGCLSVPGARALVPRAAEVTVKALDRNGQEYQFDADDLLAICVQHELDHLAGKLFVDYLSPLKRNRIKEKLEKIKRFNEKK</sequence>
<keyword id="KW-0002">3D-structure</keyword>
<keyword id="KW-0378">Hydrolase</keyword>
<keyword id="KW-0408">Iron</keyword>
<keyword id="KW-0479">Metal-binding</keyword>
<keyword id="KW-0648">Protein biosynthesis</keyword>
<keyword id="KW-1185">Reference proteome</keyword>
<reference key="1">
    <citation type="journal article" date="2000" name="Nature">
        <title>DNA sequence of both chromosomes of the cholera pathogen Vibrio cholerae.</title>
        <authorList>
            <person name="Heidelberg J.F."/>
            <person name="Eisen J.A."/>
            <person name="Nelson W.C."/>
            <person name="Clayton R.A."/>
            <person name="Gwinn M.L."/>
            <person name="Dodson R.J."/>
            <person name="Haft D.H."/>
            <person name="Hickey E.K."/>
            <person name="Peterson J.D."/>
            <person name="Umayam L.A."/>
            <person name="Gill S.R."/>
            <person name="Nelson K.E."/>
            <person name="Read T.D."/>
            <person name="Tettelin H."/>
            <person name="Richardson D.L."/>
            <person name="Ermolaeva M.D."/>
            <person name="Vamathevan J.J."/>
            <person name="Bass S."/>
            <person name="Qin H."/>
            <person name="Dragoi I."/>
            <person name="Sellers P."/>
            <person name="McDonald L.A."/>
            <person name="Utterback T.R."/>
            <person name="Fleischmann R.D."/>
            <person name="Nierman W.C."/>
            <person name="White O."/>
            <person name="Salzberg S.L."/>
            <person name="Smith H.O."/>
            <person name="Colwell R.R."/>
            <person name="Mekalanos J.J."/>
            <person name="Venter J.C."/>
            <person name="Fraser C.M."/>
        </authorList>
    </citation>
    <scope>NUCLEOTIDE SEQUENCE [LARGE SCALE GENOMIC DNA]</scope>
    <source>
        <strain>ATCC 39315 / El Tor Inaba N16961</strain>
    </source>
</reference>
<organism>
    <name type="scientific">Vibrio cholerae serotype O1 (strain ATCC 39315 / El Tor Inaba N16961)</name>
    <dbReference type="NCBI Taxonomy" id="243277"/>
    <lineage>
        <taxon>Bacteria</taxon>
        <taxon>Pseudomonadati</taxon>
        <taxon>Pseudomonadota</taxon>
        <taxon>Gammaproteobacteria</taxon>
        <taxon>Vibrionales</taxon>
        <taxon>Vibrionaceae</taxon>
        <taxon>Vibrio</taxon>
    </lineage>
</organism>
<dbReference type="EC" id="3.5.1.88" evidence="1"/>
<dbReference type="EMBL" id="AE003852">
    <property type="protein sequence ID" value="AAF93224.1"/>
    <property type="molecule type" value="Genomic_DNA"/>
</dbReference>
<dbReference type="PIR" id="A82373">
    <property type="entry name" value="A82373"/>
</dbReference>
<dbReference type="RefSeq" id="NP_229705.1">
    <property type="nucleotide sequence ID" value="NC_002505.1"/>
</dbReference>
<dbReference type="PDB" id="3FWX">
    <property type="method" value="X-ray"/>
    <property type="resolution" value="2.00 A"/>
    <property type="chains" value="A/B=1-169"/>
</dbReference>
<dbReference type="PDBsum" id="3FWX"/>
<dbReference type="SMR" id="Q9KVU3"/>
<dbReference type="STRING" id="243277.VC_0046"/>
<dbReference type="DNASU" id="2614445"/>
<dbReference type="EnsemblBacteria" id="AAF93224">
    <property type="protein sequence ID" value="AAF93224"/>
    <property type="gene ID" value="VC_0046"/>
</dbReference>
<dbReference type="KEGG" id="vch:VC_0046"/>
<dbReference type="PATRIC" id="fig|243277.26.peg.45"/>
<dbReference type="eggNOG" id="COG0242">
    <property type="taxonomic scope" value="Bacteria"/>
</dbReference>
<dbReference type="HOGENOM" id="CLU_061901_2_1_6"/>
<dbReference type="EvolutionaryTrace" id="Q9KVU3"/>
<dbReference type="Proteomes" id="UP000000584">
    <property type="component" value="Chromosome 1"/>
</dbReference>
<dbReference type="GO" id="GO:0046872">
    <property type="term" value="F:metal ion binding"/>
    <property type="evidence" value="ECO:0007669"/>
    <property type="project" value="UniProtKB-KW"/>
</dbReference>
<dbReference type="GO" id="GO:0042586">
    <property type="term" value="F:peptide deformylase activity"/>
    <property type="evidence" value="ECO:0000318"/>
    <property type="project" value="GO_Central"/>
</dbReference>
<dbReference type="GO" id="GO:0043686">
    <property type="term" value="P:co-translational protein modification"/>
    <property type="evidence" value="ECO:0000318"/>
    <property type="project" value="GO_Central"/>
</dbReference>
<dbReference type="GO" id="GO:0006412">
    <property type="term" value="P:translation"/>
    <property type="evidence" value="ECO:0007669"/>
    <property type="project" value="UniProtKB-UniRule"/>
</dbReference>
<dbReference type="CDD" id="cd00487">
    <property type="entry name" value="Pep_deformylase"/>
    <property type="match status" value="1"/>
</dbReference>
<dbReference type="FunFam" id="3.90.45.10:FF:000001">
    <property type="entry name" value="Peptide deformylase"/>
    <property type="match status" value="1"/>
</dbReference>
<dbReference type="Gene3D" id="3.90.45.10">
    <property type="entry name" value="Peptide deformylase"/>
    <property type="match status" value="1"/>
</dbReference>
<dbReference type="HAMAP" id="MF_00163">
    <property type="entry name" value="Pep_deformylase"/>
    <property type="match status" value="1"/>
</dbReference>
<dbReference type="InterPro" id="IPR023635">
    <property type="entry name" value="Peptide_deformylase"/>
</dbReference>
<dbReference type="InterPro" id="IPR036821">
    <property type="entry name" value="Peptide_deformylase_sf"/>
</dbReference>
<dbReference type="NCBIfam" id="TIGR00079">
    <property type="entry name" value="pept_deformyl"/>
    <property type="match status" value="1"/>
</dbReference>
<dbReference type="NCBIfam" id="NF001159">
    <property type="entry name" value="PRK00150.1-3"/>
    <property type="match status" value="1"/>
</dbReference>
<dbReference type="PANTHER" id="PTHR10458">
    <property type="entry name" value="PEPTIDE DEFORMYLASE"/>
    <property type="match status" value="1"/>
</dbReference>
<dbReference type="PANTHER" id="PTHR10458:SF21">
    <property type="entry name" value="PEPTIDE DEFORMYLASE"/>
    <property type="match status" value="1"/>
</dbReference>
<dbReference type="Pfam" id="PF01327">
    <property type="entry name" value="Pep_deformylase"/>
    <property type="match status" value="1"/>
</dbReference>
<dbReference type="PIRSF" id="PIRSF004749">
    <property type="entry name" value="Pep_def"/>
    <property type="match status" value="1"/>
</dbReference>
<dbReference type="PRINTS" id="PR01576">
    <property type="entry name" value="PDEFORMYLASE"/>
</dbReference>
<dbReference type="SUPFAM" id="SSF56420">
    <property type="entry name" value="Peptide deformylase"/>
    <property type="match status" value="1"/>
</dbReference>